<feature type="chain" id="PRO_0000210543" description="Uncharacterized protein MG328">
    <location>
        <begin position="1"/>
        <end position="756"/>
    </location>
</feature>
<feature type="sequence conflict" description="In Ref. 2; AAD12472." evidence="1" ref="2">
    <original>T</original>
    <variation>R</variation>
    <location>
        <position position="52"/>
    </location>
</feature>
<feature type="sequence conflict" description="In Ref. 2; AAD12472." evidence="1" ref="2">
    <original>S</original>
    <variation>W</variation>
    <location>
        <position position="65"/>
    </location>
</feature>
<dbReference type="EMBL" id="L43967">
    <property type="protein sequence ID" value="AAC71552.1"/>
    <property type="molecule type" value="Genomic_DNA"/>
</dbReference>
<dbReference type="EMBL" id="U02203">
    <property type="protein sequence ID" value="AAD12492.1"/>
    <property type="molecule type" value="Genomic_DNA"/>
</dbReference>
<dbReference type="EMBL" id="U02188">
    <property type="protein sequence ID" value="AAD12472.1"/>
    <property type="molecule type" value="Genomic_DNA"/>
</dbReference>
<dbReference type="PIR" id="C64236">
    <property type="entry name" value="C64236"/>
</dbReference>
<dbReference type="RefSeq" id="WP_010869434.1">
    <property type="nucleotide sequence ID" value="NC_000908.2"/>
</dbReference>
<dbReference type="SMR" id="Q49419"/>
<dbReference type="STRING" id="243273.MG_328"/>
<dbReference type="GeneID" id="88282501"/>
<dbReference type="KEGG" id="mge:MG_328"/>
<dbReference type="eggNOG" id="COG1511">
    <property type="taxonomic scope" value="Bacteria"/>
</dbReference>
<dbReference type="HOGENOM" id="CLU_368348_0_0_14"/>
<dbReference type="InParanoid" id="Q49419"/>
<dbReference type="OrthoDB" id="10020609at2"/>
<dbReference type="BioCyc" id="MGEN243273:G1GJ2-410-MONOMER"/>
<dbReference type="Proteomes" id="UP000000807">
    <property type="component" value="Chromosome"/>
</dbReference>
<organism>
    <name type="scientific">Mycoplasma genitalium (strain ATCC 33530 / DSM 19775 / NCTC 10195 / G37)</name>
    <name type="common">Mycoplasmoides genitalium</name>
    <dbReference type="NCBI Taxonomy" id="243273"/>
    <lineage>
        <taxon>Bacteria</taxon>
        <taxon>Bacillati</taxon>
        <taxon>Mycoplasmatota</taxon>
        <taxon>Mycoplasmoidales</taxon>
        <taxon>Mycoplasmoidaceae</taxon>
        <taxon>Mycoplasmoides</taxon>
    </lineage>
</organism>
<accession>Q49419</accession>
<accession>Q49308</accession>
<accession>Q49320</accession>
<name>Y328_MYCGE</name>
<keyword id="KW-1185">Reference proteome</keyword>
<sequence length="756" mass="88407">MAVDKELEISDFDNELDEKTLLKELVQRTNNILFSPSKITAIPFERNLLEKTFFGTVDEAEKEKSIVSFFNWMIDLKVLDKKWDKNVLNHYANQLKTREEEQQTVDQTMAFQEVDDQSVLTKEIKTGFQELKPSVITAEDDKDEIKPEATKQVSFEELFNQPSEEINETKKPEVQIFSTDKVKEPEQFDDFYSIENLTKAINPVHKTIQYDQNDDQPFVVKRILKEQHPTKKVDELDDYNNKELLLENADLKKQIDDLKENNNDQIFDLEQEIDDLKRRLSEEKSKHLHTKKLQDDLLQENRDLYEQLQNKPVAINPLSDEVNEELENLKQEKALLSDQLDALKNKSSNVQQQLALLPVLNNQINELQNQLLTAREANQRLDLVEQENDFLKNELKKLHDNTSNDENEKYDDLLNQYELLFDENETKFDKLQVKQQALNLDYQKTISALKHENDVLLDEIEWTRSKDNDFNNTKNSFEEQKKALDEKLNGLTIQNQQLQDKIAELEEWNEEKSNLNTNQLVNLQQQLKDSQNLFNVAQDKLATLEEVNLALNEKINDLEDELSGSENSNNLLAKLQADHEILQESYGKLKTDFEKLKKNKLNDANEQYQDLLSAFEETNSELEKAKQSLSASDSENNQLKQQINSLENAKKELQFTPVTSDEHLDELETLKIEKEQLFLENQALQNQLQYFNDISANQTEEIKEASDEDKPVEIKKPRIKKRDFVIQNKDDKLAKLSKKERIQAYAERLAKINANE</sequence>
<gene>
    <name type="ordered locus">MG328</name>
</gene>
<proteinExistence type="predicted"/>
<reference key="1">
    <citation type="journal article" date="1995" name="Science">
        <title>The minimal gene complement of Mycoplasma genitalium.</title>
        <authorList>
            <person name="Fraser C.M."/>
            <person name="Gocayne J.D."/>
            <person name="White O."/>
            <person name="Adams M.D."/>
            <person name="Clayton R.A."/>
            <person name="Fleischmann R.D."/>
            <person name="Bult C.J."/>
            <person name="Kerlavage A.R."/>
            <person name="Sutton G.G."/>
            <person name="Kelley J.M."/>
            <person name="Fritchman J.L."/>
            <person name="Weidman J.F."/>
            <person name="Small K.V."/>
            <person name="Sandusky M."/>
            <person name="Fuhrmann J.L."/>
            <person name="Nguyen D.T."/>
            <person name="Utterback T.R."/>
            <person name="Saudek D.M."/>
            <person name="Phillips C.A."/>
            <person name="Merrick J.M."/>
            <person name="Tomb J.-F."/>
            <person name="Dougherty B.A."/>
            <person name="Bott K.F."/>
            <person name="Hu P.-C."/>
            <person name="Lucier T.S."/>
            <person name="Peterson S.N."/>
            <person name="Smith H.O."/>
            <person name="Hutchison C.A. III"/>
            <person name="Venter J.C."/>
        </authorList>
    </citation>
    <scope>NUCLEOTIDE SEQUENCE [LARGE SCALE GENOMIC DNA]</scope>
    <source>
        <strain>ATCC 33530 / DSM 19775 / NCTC 10195 / G37</strain>
    </source>
</reference>
<reference key="2">
    <citation type="journal article" date="1993" name="J. Bacteriol.">
        <title>A survey of the Mycoplasma genitalium genome by using random sequencing.</title>
        <authorList>
            <person name="Peterson S.N."/>
            <person name="Hu P.-C."/>
            <person name="Bott K.F."/>
            <person name="Hutchison C.A. III"/>
        </authorList>
    </citation>
    <scope>NUCLEOTIDE SEQUENCE [GENOMIC DNA] OF 19-113 AND 155-272</scope>
    <source>
        <strain>ATCC 33530 / DSM 19775 / NCTC 10195 / G37</strain>
    </source>
</reference>
<evidence type="ECO:0000305" key="1"/>
<protein>
    <recommendedName>
        <fullName>Uncharacterized protein MG328</fullName>
    </recommendedName>
</protein>